<sequence>MTQMTVQVVTPDGIKYDHHAKCISVTTPDGEMGILPNHINLIAPLQVHEMKIRRGGEDEKVDWIAINGGIIEIKDNVVTVVADSAERDRDIDVSRAERAKLRAEREIAQAETTHNIDEVRRAKVALRRALNRINVSKK</sequence>
<organism>
    <name type="scientific">Streptococcus pyogenes serotype M28 (strain MGAS6180)</name>
    <dbReference type="NCBI Taxonomy" id="319701"/>
    <lineage>
        <taxon>Bacteria</taxon>
        <taxon>Bacillati</taxon>
        <taxon>Bacillota</taxon>
        <taxon>Bacilli</taxon>
        <taxon>Lactobacillales</taxon>
        <taxon>Streptococcaceae</taxon>
        <taxon>Streptococcus</taxon>
    </lineage>
</organism>
<accession>Q48UD2</accession>
<gene>
    <name evidence="1" type="primary">atpC</name>
    <name type="ordered locus">M28_Spy0560</name>
</gene>
<name>ATPE_STRPM</name>
<dbReference type="EMBL" id="CP000056">
    <property type="protein sequence ID" value="AAX71674.1"/>
    <property type="molecule type" value="Genomic_DNA"/>
</dbReference>
<dbReference type="RefSeq" id="WP_002985233.1">
    <property type="nucleotide sequence ID" value="NC_007296.2"/>
</dbReference>
<dbReference type="SMR" id="Q48UD2"/>
<dbReference type="KEGG" id="spb:M28_Spy0560"/>
<dbReference type="HOGENOM" id="CLU_084338_1_0_9"/>
<dbReference type="GO" id="GO:0005886">
    <property type="term" value="C:plasma membrane"/>
    <property type="evidence" value="ECO:0007669"/>
    <property type="project" value="UniProtKB-SubCell"/>
</dbReference>
<dbReference type="GO" id="GO:0045259">
    <property type="term" value="C:proton-transporting ATP synthase complex"/>
    <property type="evidence" value="ECO:0007669"/>
    <property type="project" value="UniProtKB-KW"/>
</dbReference>
<dbReference type="GO" id="GO:0005524">
    <property type="term" value="F:ATP binding"/>
    <property type="evidence" value="ECO:0007669"/>
    <property type="project" value="UniProtKB-UniRule"/>
</dbReference>
<dbReference type="GO" id="GO:0046933">
    <property type="term" value="F:proton-transporting ATP synthase activity, rotational mechanism"/>
    <property type="evidence" value="ECO:0007669"/>
    <property type="project" value="UniProtKB-UniRule"/>
</dbReference>
<dbReference type="CDD" id="cd12152">
    <property type="entry name" value="F1-ATPase_delta"/>
    <property type="match status" value="1"/>
</dbReference>
<dbReference type="Gene3D" id="1.20.5.440">
    <property type="entry name" value="ATP synthase delta/epsilon subunit, C-terminal domain"/>
    <property type="match status" value="1"/>
</dbReference>
<dbReference type="Gene3D" id="2.60.15.10">
    <property type="entry name" value="F0F1 ATP synthase delta/epsilon subunit, N-terminal"/>
    <property type="match status" value="1"/>
</dbReference>
<dbReference type="HAMAP" id="MF_00530">
    <property type="entry name" value="ATP_synth_epsil_bac"/>
    <property type="match status" value="1"/>
</dbReference>
<dbReference type="InterPro" id="IPR001469">
    <property type="entry name" value="ATP_synth_F1_dsu/esu"/>
</dbReference>
<dbReference type="InterPro" id="IPR020546">
    <property type="entry name" value="ATP_synth_F1_dsu/esu_N"/>
</dbReference>
<dbReference type="InterPro" id="IPR020547">
    <property type="entry name" value="ATP_synth_F1_esu_C"/>
</dbReference>
<dbReference type="InterPro" id="IPR036771">
    <property type="entry name" value="ATPsynth_dsu/esu_N"/>
</dbReference>
<dbReference type="NCBIfam" id="TIGR01216">
    <property type="entry name" value="ATP_synt_epsi"/>
    <property type="match status" value="1"/>
</dbReference>
<dbReference type="NCBIfam" id="NF001846">
    <property type="entry name" value="PRK00571.1-3"/>
    <property type="match status" value="1"/>
</dbReference>
<dbReference type="PANTHER" id="PTHR13822">
    <property type="entry name" value="ATP SYNTHASE DELTA/EPSILON CHAIN"/>
    <property type="match status" value="1"/>
</dbReference>
<dbReference type="PANTHER" id="PTHR13822:SF10">
    <property type="entry name" value="ATP SYNTHASE EPSILON CHAIN, CHLOROPLASTIC"/>
    <property type="match status" value="1"/>
</dbReference>
<dbReference type="Pfam" id="PF00401">
    <property type="entry name" value="ATP-synt_DE"/>
    <property type="match status" value="1"/>
</dbReference>
<dbReference type="Pfam" id="PF02823">
    <property type="entry name" value="ATP-synt_DE_N"/>
    <property type="match status" value="1"/>
</dbReference>
<dbReference type="SUPFAM" id="SSF51344">
    <property type="entry name" value="Epsilon subunit of F1F0-ATP synthase N-terminal domain"/>
    <property type="match status" value="1"/>
</dbReference>
<evidence type="ECO:0000255" key="1">
    <source>
        <dbReference type="HAMAP-Rule" id="MF_00530"/>
    </source>
</evidence>
<reference key="1">
    <citation type="journal article" date="2005" name="J. Infect. Dis.">
        <title>Genome sequence of a serotype M28 strain of group A Streptococcus: potential new insights into puerperal sepsis and bacterial disease specificity.</title>
        <authorList>
            <person name="Green N.M."/>
            <person name="Zhang S."/>
            <person name="Porcella S.F."/>
            <person name="Nagiec M.J."/>
            <person name="Barbian K.D."/>
            <person name="Beres S.B."/>
            <person name="Lefebvre R.B."/>
            <person name="Musser J.M."/>
        </authorList>
    </citation>
    <scope>NUCLEOTIDE SEQUENCE [LARGE SCALE GENOMIC DNA]</scope>
    <source>
        <strain>MGAS6180</strain>
    </source>
</reference>
<protein>
    <recommendedName>
        <fullName evidence="1">ATP synthase epsilon chain</fullName>
    </recommendedName>
    <alternativeName>
        <fullName evidence="1">ATP synthase F1 sector epsilon subunit</fullName>
    </alternativeName>
    <alternativeName>
        <fullName evidence="1">F-ATPase epsilon subunit</fullName>
    </alternativeName>
</protein>
<comment type="function">
    <text evidence="1">Produces ATP from ADP in the presence of a proton gradient across the membrane.</text>
</comment>
<comment type="subunit">
    <text>F-type ATPases have 2 components, CF(1) - the catalytic core - and CF(0) - the membrane proton channel. CF(1) has five subunits: alpha(3), beta(3), gamma(1), delta(1), epsilon(1). CF(0) has three main subunits: a, b and c.</text>
</comment>
<comment type="subcellular location">
    <subcellularLocation>
        <location evidence="1">Cell membrane</location>
        <topology evidence="1">Peripheral membrane protein</topology>
    </subcellularLocation>
</comment>
<comment type="similarity">
    <text evidence="1">Belongs to the ATPase epsilon chain family.</text>
</comment>
<feature type="chain" id="PRO_0000265905" description="ATP synthase epsilon chain">
    <location>
        <begin position="1"/>
        <end position="138"/>
    </location>
</feature>
<keyword id="KW-0066">ATP synthesis</keyword>
<keyword id="KW-1003">Cell membrane</keyword>
<keyword id="KW-0139">CF(1)</keyword>
<keyword id="KW-0375">Hydrogen ion transport</keyword>
<keyword id="KW-0406">Ion transport</keyword>
<keyword id="KW-0472">Membrane</keyword>
<keyword id="KW-0813">Transport</keyword>
<proteinExistence type="inferred from homology"/>